<keyword id="KW-0002">3D-structure</keyword>
<keyword id="KW-0025">Alternative splicing</keyword>
<keyword id="KW-1017">Isopeptide bond</keyword>
<keyword id="KW-0539">Nucleus</keyword>
<keyword id="KW-1185">Reference proteome</keyword>
<keyword id="KW-0694">RNA-binding</keyword>
<keyword id="KW-0832">Ubl conjugation</keyword>
<accession>Q8VHN8</accession>
<accession>Q3TW47</accession>
<accession>Q8R039</accession>
<accession>Q8R3D9</accession>
<accession>Q9CR90</accession>
<accession>Q9D8M0</accession>
<dbReference type="EMBL" id="AF435792">
    <property type="protein sequence ID" value="AAL57490.1"/>
    <property type="molecule type" value="mRNA"/>
</dbReference>
<dbReference type="EMBL" id="AK002378">
    <property type="protein sequence ID" value="BAB22055.1"/>
    <property type="molecule type" value="mRNA"/>
</dbReference>
<dbReference type="EMBL" id="AK003241">
    <property type="protein sequence ID" value="BAB22662.1"/>
    <property type="molecule type" value="mRNA"/>
</dbReference>
<dbReference type="EMBL" id="AK007897">
    <property type="protein sequence ID" value="BAB25336.1"/>
    <property type="molecule type" value="mRNA"/>
</dbReference>
<dbReference type="EMBL" id="AK159841">
    <property type="protein sequence ID" value="BAE35419.1"/>
    <property type="molecule type" value="mRNA"/>
</dbReference>
<dbReference type="EMBL" id="BC025569">
    <property type="protein sequence ID" value="AAH25569.1"/>
    <property type="molecule type" value="mRNA"/>
</dbReference>
<dbReference type="EMBL" id="BC028494">
    <property type="protein sequence ID" value="AAH28494.1"/>
    <property type="molecule type" value="mRNA"/>
</dbReference>
<dbReference type="CCDS" id="CCDS27927.1">
    <molecule id="Q8VHN8-1"/>
</dbReference>
<dbReference type="CCDS" id="CCDS88870.1">
    <molecule id="Q8VHN8-3"/>
</dbReference>
<dbReference type="RefSeq" id="NP_001303644.1">
    <molecule id="Q8VHN8-3"/>
    <property type="nucleotide sequence ID" value="NM_001316715.1"/>
</dbReference>
<dbReference type="RefSeq" id="NP_080115.1">
    <molecule id="Q8VHN8-1"/>
    <property type="nucleotide sequence ID" value="NM_025839.4"/>
</dbReference>
<dbReference type="PDB" id="4ZG0">
    <property type="method" value="X-ray"/>
    <property type="resolution" value="2.01 A"/>
    <property type="chains" value="A/B=8-204"/>
</dbReference>
<dbReference type="PDB" id="5Z78">
    <property type="method" value="X-ray"/>
    <property type="resolution" value="1.76 A"/>
    <property type="chains" value="A/B=6-211"/>
</dbReference>
<dbReference type="PDBsum" id="4ZG0"/>
<dbReference type="PDBsum" id="5Z78"/>
<dbReference type="SMR" id="Q8VHN8"/>
<dbReference type="BioGRID" id="211803">
    <property type="interactions" value="5"/>
</dbReference>
<dbReference type="FunCoup" id="Q8VHN8">
    <property type="interactions" value="1580"/>
</dbReference>
<dbReference type="STRING" id="10090.ENSMUSP00000155142"/>
<dbReference type="iPTMnet" id="Q8VHN8"/>
<dbReference type="PhosphoSitePlus" id="Q8VHN8"/>
<dbReference type="SwissPalm" id="Q8VHN8"/>
<dbReference type="jPOST" id="Q8VHN8"/>
<dbReference type="PaxDb" id="10090-ENSMUSP00000054201"/>
<dbReference type="PeptideAtlas" id="Q8VHN8"/>
<dbReference type="ProteomicsDB" id="258887">
    <molecule id="Q8VHN8-1"/>
</dbReference>
<dbReference type="ProteomicsDB" id="258888">
    <molecule id="Q8VHN8-2"/>
</dbReference>
<dbReference type="ProteomicsDB" id="258889">
    <molecule id="Q8VHN8-3"/>
</dbReference>
<dbReference type="Pumba" id="Q8VHN8"/>
<dbReference type="Antibodypedia" id="24391">
    <property type="antibodies" value="53 antibodies from 16 providers"/>
</dbReference>
<dbReference type="DNASU" id="66911"/>
<dbReference type="Ensembl" id="ENSMUST00000050881.10">
    <molecule id="Q8VHN8-3"/>
    <property type="protein sequence ID" value="ENSMUSP00000054201.10"/>
    <property type="gene ID" value="ENSMUSG00000022516.11"/>
</dbReference>
<dbReference type="Ensembl" id="ENSMUST00000230931.2">
    <molecule id="Q8VHN8-1"/>
    <property type="protein sequence ID" value="ENSMUSP00000155142.2"/>
    <property type="gene ID" value="ENSMUSG00000022516.11"/>
</dbReference>
<dbReference type="GeneID" id="66911"/>
<dbReference type="KEGG" id="mmu:66911"/>
<dbReference type="UCSC" id="uc029svr.1">
    <molecule id="Q8VHN8-1"/>
    <property type="organism name" value="mouse"/>
</dbReference>
<dbReference type="UCSC" id="uc029svs.1">
    <molecule id="Q8VHN8-3"/>
    <property type="organism name" value="mouse"/>
</dbReference>
<dbReference type="UCSC" id="uc029svt.1">
    <molecule id="Q8VHN8-2"/>
    <property type="organism name" value="mouse"/>
</dbReference>
<dbReference type="AGR" id="MGI:1914161"/>
<dbReference type="CTD" id="84309"/>
<dbReference type="MGI" id="MGI:1914161">
    <property type="gene designation" value="Nudt16l1"/>
</dbReference>
<dbReference type="VEuPathDB" id="HostDB:ENSMUSG00000022516"/>
<dbReference type="eggNOG" id="ENOG502S20E">
    <property type="taxonomic scope" value="Eukaryota"/>
</dbReference>
<dbReference type="GeneTree" id="ENSGT00390000016224"/>
<dbReference type="HOGENOM" id="CLU_110418_0_1_1"/>
<dbReference type="InParanoid" id="Q8VHN8"/>
<dbReference type="OrthoDB" id="5950381at2759"/>
<dbReference type="PhylomeDB" id="Q8VHN8"/>
<dbReference type="BioGRID-ORCS" id="66911">
    <property type="hits" value="5 hits in 78 CRISPR screens"/>
</dbReference>
<dbReference type="ChiTaRS" id="Nudt16l1">
    <property type="organism name" value="mouse"/>
</dbReference>
<dbReference type="PRO" id="PR:Q8VHN8"/>
<dbReference type="Proteomes" id="UP000000589">
    <property type="component" value="Chromosome 16"/>
</dbReference>
<dbReference type="RNAct" id="Q8VHN8">
    <property type="molecule type" value="protein"/>
</dbReference>
<dbReference type="Bgee" id="ENSMUSG00000022516">
    <property type="expression patterns" value="Expressed in paneth cell and 256 other cell types or tissues"/>
</dbReference>
<dbReference type="ExpressionAtlas" id="Q8VHN8">
    <property type="expression patterns" value="baseline and differential"/>
</dbReference>
<dbReference type="GO" id="GO:0005634">
    <property type="term" value="C:nucleus"/>
    <property type="evidence" value="ECO:0000250"/>
    <property type="project" value="UniProtKB"/>
</dbReference>
<dbReference type="GO" id="GO:0030515">
    <property type="term" value="F:snoRNA binding"/>
    <property type="evidence" value="ECO:0000250"/>
    <property type="project" value="UniProtKB"/>
</dbReference>
<dbReference type="GO" id="GO:2001033">
    <property type="term" value="P:negative regulation of double-strand break repair via nonhomologous end joining"/>
    <property type="evidence" value="ECO:0000250"/>
    <property type="project" value="UniProtKB"/>
</dbReference>
<dbReference type="CDD" id="cd18869">
    <property type="entry name" value="NUDIX_U8_SnoRNA_DE_Nudt16"/>
    <property type="match status" value="1"/>
</dbReference>
<dbReference type="FunFam" id="3.90.79.10:FF:000038">
    <property type="entry name" value="Tudor-interacting repair regulator protein"/>
    <property type="match status" value="1"/>
</dbReference>
<dbReference type="Gene3D" id="3.90.79.10">
    <property type="entry name" value="Nucleoside Triphosphate Pyrophosphohydrolase"/>
    <property type="match status" value="1"/>
</dbReference>
<dbReference type="InterPro" id="IPR015797">
    <property type="entry name" value="NUDIX_hydrolase-like_dom_sf"/>
</dbReference>
<dbReference type="InterPro" id="IPR054754">
    <property type="entry name" value="NudT16"/>
</dbReference>
<dbReference type="PANTHER" id="PTHR31699">
    <property type="entry name" value="NUDIX T16 FAMILY MEMBER"/>
    <property type="match status" value="1"/>
</dbReference>
<dbReference type="PANTHER" id="PTHR31699:SF6">
    <property type="entry name" value="TUDOR-INTERACTING REPAIR REGULATOR PROTEIN"/>
    <property type="match status" value="1"/>
</dbReference>
<dbReference type="Pfam" id="PF22327">
    <property type="entry name" value="Nudt16-like"/>
    <property type="match status" value="1"/>
</dbReference>
<dbReference type="SUPFAM" id="SSF55811">
    <property type="entry name" value="Nudix"/>
    <property type="match status" value="1"/>
</dbReference>
<comment type="function">
    <text evidence="1">Key regulator of TP53BP1 required to stabilize TP53BP1 and regulate its recruitment to chromatin. In absence of DNA damage, interacts with the tandem Tudor-like domain of TP53BP1, masking the region that binds histone H4 dimethylated at 'Lys-20' (H4K20me2), thereby preventing TP53BP1 recruitment to chromatin and maintaining TP53BP1 localization to the nucleus. Following DNA damage, ATM-induced phosphorylation of TP53BP1 and subsequent recruitment of RIF1 leads to dissociate NUDT16L1/TIRR from TP53BP1, unmasking the tandem Tudor-like domain and allowing recruitment of TP53BP1 to DNA double strand breaks (DSBs). Binds U8 snoRNA.</text>
</comment>
<comment type="subunit">
    <text evidence="1 2 3">Homodimer (PubMed:26100207). Interacts with TP53BP1 (via the Tudor-like domain); interaction is abolished following DNA damage and TP53BP1 phosphorylation by ATM (By similarity). Interacts (via the cytoplasmic part) with SDC4 (PubMed:11805099). Interacts with TGFB1I1 and PXN (PubMed:11805099).</text>
</comment>
<comment type="subcellular location">
    <subcellularLocation>
        <location evidence="1">Nucleus</location>
    </subcellularLocation>
</comment>
<comment type="alternative products">
    <event type="alternative splicing"/>
    <isoform>
        <id>Q8VHN8-1</id>
        <name>1</name>
        <sequence type="displayed"/>
    </isoform>
    <isoform>
        <id>Q8VHN8-2</id>
        <name>2</name>
        <sequence type="described" ref="VSP_014279"/>
    </isoform>
    <isoform>
        <id>Q8VHN8-3</id>
        <name>3</name>
        <sequence type="described" ref="VSP_014277 VSP_014278"/>
    </isoform>
</comment>
<comment type="similarity">
    <text evidence="6">Belongs to the Nudix hydrolase family. TIRR subfamily.</text>
</comment>
<comment type="caution">
    <text evidence="6">Although strongly related to the nudix NUDT16 protein, lacks the Nudix box and is therefore not related to the rest of the family. Lacks a number of residues which are necessary for hydrolase activity and does not play a role in U8 snoRNA decapping activity.</text>
</comment>
<evidence type="ECO:0000250" key="1">
    <source>
        <dbReference type="UniProtKB" id="Q9BRJ7"/>
    </source>
</evidence>
<evidence type="ECO:0000269" key="2">
    <source>
    </source>
</evidence>
<evidence type="ECO:0000269" key="3">
    <source>
    </source>
</evidence>
<evidence type="ECO:0000303" key="4">
    <source>
    </source>
</evidence>
<evidence type="ECO:0000303" key="5">
    <source>
    </source>
</evidence>
<evidence type="ECO:0000305" key="6"/>
<evidence type="ECO:0000312" key="7">
    <source>
        <dbReference type="MGI" id="MGI:1914161"/>
    </source>
</evidence>
<evidence type="ECO:0007744" key="8">
    <source>
        <dbReference type="PDB" id="4ZG0"/>
    </source>
</evidence>
<evidence type="ECO:0007829" key="9">
    <source>
        <dbReference type="PDB" id="4ZG0"/>
    </source>
</evidence>
<evidence type="ECO:0007829" key="10">
    <source>
        <dbReference type="PDB" id="5Z78"/>
    </source>
</evidence>
<name>TIRR_MOUSE</name>
<feature type="chain" id="PRO_0000097649" description="Tudor-interacting repair regulator protein">
    <location>
        <begin position="1"/>
        <end position="211"/>
    </location>
</feature>
<feature type="region of interest" description="Interaction with PXN" evidence="2">
    <location>
        <begin position="118"/>
        <end position="205"/>
    </location>
</feature>
<feature type="site" description="Required for interaction with TP53BP1" evidence="1">
    <location>
        <position position="10"/>
    </location>
</feature>
<feature type="cross-link" description="Glycyl lysine isopeptide (Lys-Gly) (interchain with G-Cter in ubiquitin)" evidence="1">
    <location>
        <position position="10"/>
    </location>
</feature>
<feature type="cross-link" description="Glycyl lysine isopeptide (Lys-Gly) (interchain with G-Cter in ubiquitin)" evidence="1">
    <location>
        <position position="151"/>
    </location>
</feature>
<feature type="splice variant" id="VSP_014277" description="In isoform 3." evidence="5">
    <original>LGLVRVPLYTQK</original>
    <variation>GLLPGARPHSHS</variation>
    <location>
        <begin position="140"/>
        <end position="151"/>
    </location>
</feature>
<feature type="splice variant" id="VSP_014278" description="In isoform 3." evidence="5">
    <location>
        <begin position="152"/>
        <end position="211"/>
    </location>
</feature>
<feature type="splice variant" id="VSP_014279" description="In isoform 2." evidence="5">
    <original>VLNMMPSEKLAEALASATEKQKKALEKLLPPSS</original>
    <variation>ALEFPRRVPSSVFAFASLLTARDMQAAVHHYCPKQSLGPSYTLRMAVPHMILFSPWGPL</variation>
    <location>
        <begin position="179"/>
        <end position="211"/>
    </location>
</feature>
<feature type="sequence conflict" description="In Ref. 1; AAL57490." evidence="6" ref="1">
    <original>M</original>
    <variation>I</variation>
    <location>
        <position position="18"/>
    </location>
</feature>
<feature type="sequence conflict" description="In Ref. 2; BAB25336." evidence="6" ref="2">
    <original>LA</original>
    <variation>WP</variation>
    <location>
        <begin position="192"/>
        <end position="193"/>
    </location>
</feature>
<feature type="strand" evidence="9">
    <location>
        <begin position="10"/>
        <end position="12"/>
    </location>
</feature>
<feature type="helix" evidence="10">
    <location>
        <begin position="14"/>
        <end position="19"/>
    </location>
</feature>
<feature type="strand" evidence="10">
    <location>
        <begin position="25"/>
        <end position="40"/>
    </location>
</feature>
<feature type="turn" evidence="10">
    <location>
        <begin position="41"/>
        <end position="43"/>
    </location>
</feature>
<feature type="strand" evidence="10">
    <location>
        <begin position="44"/>
        <end position="55"/>
    </location>
</feature>
<feature type="strand" evidence="10">
    <location>
        <begin position="63"/>
        <end position="67"/>
    </location>
</feature>
<feature type="turn" evidence="10">
    <location>
        <begin position="69"/>
        <end position="71"/>
    </location>
</feature>
<feature type="helix" evidence="10">
    <location>
        <begin position="74"/>
        <end position="85"/>
    </location>
</feature>
<feature type="strand" evidence="9">
    <location>
        <begin position="86"/>
        <end position="88"/>
    </location>
</feature>
<feature type="helix" evidence="10">
    <location>
        <begin position="93"/>
        <end position="95"/>
    </location>
</feature>
<feature type="strand" evidence="10">
    <location>
        <begin position="96"/>
        <end position="101"/>
    </location>
</feature>
<feature type="strand" evidence="10">
    <location>
        <begin position="103"/>
        <end position="106"/>
    </location>
</feature>
<feature type="strand" evidence="10">
    <location>
        <begin position="108"/>
        <end position="117"/>
    </location>
</feature>
<feature type="helix" evidence="10">
    <location>
        <begin position="119"/>
        <end position="130"/>
    </location>
</feature>
<feature type="turn" evidence="10">
    <location>
        <begin position="136"/>
        <end position="138"/>
    </location>
</feature>
<feature type="strand" evidence="10">
    <location>
        <begin position="139"/>
        <end position="145"/>
    </location>
</feature>
<feature type="helix" evidence="10">
    <location>
        <begin position="157"/>
        <end position="161"/>
    </location>
</feature>
<feature type="helix" evidence="10">
    <location>
        <begin position="167"/>
        <end position="179"/>
    </location>
</feature>
<feature type="helix" evidence="10">
    <location>
        <begin position="185"/>
        <end position="202"/>
    </location>
</feature>
<reference key="1">
    <citation type="journal article" date="2002" name="J. Biol. Chem.">
        <title>Syndesmos, a syndecan-4 cytoplasmic domain interactor, binds to the focal adhesion adaptor proteins paxillin and Hic-5.</title>
        <authorList>
            <person name="Denhez F."/>
            <person name="Wilcox-Adelman S.A."/>
            <person name="Baciu P.C."/>
            <person name="Saoncella S."/>
            <person name="Lee S."/>
            <person name="French B."/>
            <person name="Neveu W."/>
            <person name="Goetinck P.F."/>
        </authorList>
    </citation>
    <scope>NUCLEOTIDE SEQUENCE [MRNA] (ISOFORM 1)</scope>
    <scope>INTERACTION WITH SDC4; TGFB1I1 AND PXN</scope>
</reference>
<reference key="2">
    <citation type="journal article" date="2005" name="Science">
        <title>The transcriptional landscape of the mammalian genome.</title>
        <authorList>
            <person name="Carninci P."/>
            <person name="Kasukawa T."/>
            <person name="Katayama S."/>
            <person name="Gough J."/>
            <person name="Frith M.C."/>
            <person name="Maeda N."/>
            <person name="Oyama R."/>
            <person name="Ravasi T."/>
            <person name="Lenhard B."/>
            <person name="Wells C."/>
            <person name="Kodzius R."/>
            <person name="Shimokawa K."/>
            <person name="Bajic V.B."/>
            <person name="Brenner S.E."/>
            <person name="Batalov S."/>
            <person name="Forrest A.R."/>
            <person name="Zavolan M."/>
            <person name="Davis M.J."/>
            <person name="Wilming L.G."/>
            <person name="Aidinis V."/>
            <person name="Allen J.E."/>
            <person name="Ambesi-Impiombato A."/>
            <person name="Apweiler R."/>
            <person name="Aturaliya R.N."/>
            <person name="Bailey T.L."/>
            <person name="Bansal M."/>
            <person name="Baxter L."/>
            <person name="Beisel K.W."/>
            <person name="Bersano T."/>
            <person name="Bono H."/>
            <person name="Chalk A.M."/>
            <person name="Chiu K.P."/>
            <person name="Choudhary V."/>
            <person name="Christoffels A."/>
            <person name="Clutterbuck D.R."/>
            <person name="Crowe M.L."/>
            <person name="Dalla E."/>
            <person name="Dalrymple B.P."/>
            <person name="de Bono B."/>
            <person name="Della Gatta G."/>
            <person name="di Bernardo D."/>
            <person name="Down T."/>
            <person name="Engstrom P."/>
            <person name="Fagiolini M."/>
            <person name="Faulkner G."/>
            <person name="Fletcher C.F."/>
            <person name="Fukushima T."/>
            <person name="Furuno M."/>
            <person name="Futaki S."/>
            <person name="Gariboldi M."/>
            <person name="Georgii-Hemming P."/>
            <person name="Gingeras T.R."/>
            <person name="Gojobori T."/>
            <person name="Green R.E."/>
            <person name="Gustincich S."/>
            <person name="Harbers M."/>
            <person name="Hayashi Y."/>
            <person name="Hensch T.K."/>
            <person name="Hirokawa N."/>
            <person name="Hill D."/>
            <person name="Huminiecki L."/>
            <person name="Iacono M."/>
            <person name="Ikeo K."/>
            <person name="Iwama A."/>
            <person name="Ishikawa T."/>
            <person name="Jakt M."/>
            <person name="Kanapin A."/>
            <person name="Katoh M."/>
            <person name="Kawasawa Y."/>
            <person name="Kelso J."/>
            <person name="Kitamura H."/>
            <person name="Kitano H."/>
            <person name="Kollias G."/>
            <person name="Krishnan S.P."/>
            <person name="Kruger A."/>
            <person name="Kummerfeld S.K."/>
            <person name="Kurochkin I.V."/>
            <person name="Lareau L.F."/>
            <person name="Lazarevic D."/>
            <person name="Lipovich L."/>
            <person name="Liu J."/>
            <person name="Liuni S."/>
            <person name="McWilliam S."/>
            <person name="Madan Babu M."/>
            <person name="Madera M."/>
            <person name="Marchionni L."/>
            <person name="Matsuda H."/>
            <person name="Matsuzawa S."/>
            <person name="Miki H."/>
            <person name="Mignone F."/>
            <person name="Miyake S."/>
            <person name="Morris K."/>
            <person name="Mottagui-Tabar S."/>
            <person name="Mulder N."/>
            <person name="Nakano N."/>
            <person name="Nakauchi H."/>
            <person name="Ng P."/>
            <person name="Nilsson R."/>
            <person name="Nishiguchi S."/>
            <person name="Nishikawa S."/>
            <person name="Nori F."/>
            <person name="Ohara O."/>
            <person name="Okazaki Y."/>
            <person name="Orlando V."/>
            <person name="Pang K.C."/>
            <person name="Pavan W.J."/>
            <person name="Pavesi G."/>
            <person name="Pesole G."/>
            <person name="Petrovsky N."/>
            <person name="Piazza S."/>
            <person name="Reed J."/>
            <person name="Reid J.F."/>
            <person name="Ring B.Z."/>
            <person name="Ringwald M."/>
            <person name="Rost B."/>
            <person name="Ruan Y."/>
            <person name="Salzberg S.L."/>
            <person name="Sandelin A."/>
            <person name="Schneider C."/>
            <person name="Schoenbach C."/>
            <person name="Sekiguchi K."/>
            <person name="Semple C.A."/>
            <person name="Seno S."/>
            <person name="Sessa L."/>
            <person name="Sheng Y."/>
            <person name="Shibata Y."/>
            <person name="Shimada H."/>
            <person name="Shimada K."/>
            <person name="Silva D."/>
            <person name="Sinclair B."/>
            <person name="Sperling S."/>
            <person name="Stupka E."/>
            <person name="Sugiura K."/>
            <person name="Sultana R."/>
            <person name="Takenaka Y."/>
            <person name="Taki K."/>
            <person name="Tammoja K."/>
            <person name="Tan S.L."/>
            <person name="Tang S."/>
            <person name="Taylor M.S."/>
            <person name="Tegner J."/>
            <person name="Teichmann S.A."/>
            <person name="Ueda H.R."/>
            <person name="van Nimwegen E."/>
            <person name="Verardo R."/>
            <person name="Wei C.L."/>
            <person name="Yagi K."/>
            <person name="Yamanishi H."/>
            <person name="Zabarovsky E."/>
            <person name="Zhu S."/>
            <person name="Zimmer A."/>
            <person name="Hide W."/>
            <person name="Bult C."/>
            <person name="Grimmond S.M."/>
            <person name="Teasdale R.D."/>
            <person name="Liu E.T."/>
            <person name="Brusic V."/>
            <person name="Quackenbush J."/>
            <person name="Wahlestedt C."/>
            <person name="Mattick J.S."/>
            <person name="Hume D.A."/>
            <person name="Kai C."/>
            <person name="Sasaki D."/>
            <person name="Tomaru Y."/>
            <person name="Fukuda S."/>
            <person name="Kanamori-Katayama M."/>
            <person name="Suzuki M."/>
            <person name="Aoki J."/>
            <person name="Arakawa T."/>
            <person name="Iida J."/>
            <person name="Imamura K."/>
            <person name="Itoh M."/>
            <person name="Kato T."/>
            <person name="Kawaji H."/>
            <person name="Kawagashira N."/>
            <person name="Kawashima T."/>
            <person name="Kojima M."/>
            <person name="Kondo S."/>
            <person name="Konno H."/>
            <person name="Nakano K."/>
            <person name="Ninomiya N."/>
            <person name="Nishio T."/>
            <person name="Okada M."/>
            <person name="Plessy C."/>
            <person name="Shibata K."/>
            <person name="Shiraki T."/>
            <person name="Suzuki S."/>
            <person name="Tagami M."/>
            <person name="Waki K."/>
            <person name="Watahiki A."/>
            <person name="Okamura-Oho Y."/>
            <person name="Suzuki H."/>
            <person name="Kawai J."/>
            <person name="Hayashizaki Y."/>
        </authorList>
    </citation>
    <scope>NUCLEOTIDE SEQUENCE [LARGE SCALE MRNA] (ISOFORM 1)</scope>
    <source>
        <strain>C57BL/6J</strain>
        <tissue>Kidney</tissue>
        <tissue>Pancreas</tissue>
    </source>
</reference>
<reference key="3">
    <citation type="journal article" date="2004" name="Genome Res.">
        <title>The status, quality, and expansion of the NIH full-length cDNA project: the Mammalian Gene Collection (MGC).</title>
        <authorList>
            <consortium name="The MGC Project Team"/>
        </authorList>
    </citation>
    <scope>NUCLEOTIDE SEQUENCE [LARGE SCALE MRNA] (ISOFORMS 2 AND 3)</scope>
    <source>
        <strain>FVB/N</strain>
        <tissue>Mammary gland</tissue>
        <tissue>Mammary tumor</tissue>
    </source>
</reference>
<reference key="4">
    <citation type="journal article" date="2010" name="Cell">
        <title>A tissue-specific atlas of mouse protein phosphorylation and expression.</title>
        <authorList>
            <person name="Huttlin E.L."/>
            <person name="Jedrychowski M.P."/>
            <person name="Elias J.E."/>
            <person name="Goswami T."/>
            <person name="Rad R."/>
            <person name="Beausoleil S.A."/>
            <person name="Villen J."/>
            <person name="Haas W."/>
            <person name="Sowa M.E."/>
            <person name="Gygi S.P."/>
        </authorList>
    </citation>
    <scope>IDENTIFICATION BY MASS SPECTROMETRY [LARGE SCALE ANALYSIS]</scope>
    <source>
        <tissue>Kidney</tissue>
        <tissue>Liver</tissue>
        <tissue>Lung</tissue>
        <tissue>Pancreas</tissue>
        <tissue>Spleen</tissue>
        <tissue>Testis</tissue>
    </source>
</reference>
<reference evidence="8" key="5">
    <citation type="journal article" date="2015" name="Biochem. Biophys. Res. Commun.">
        <title>Crystal structure of syndesmos and its interaction with Syndecan-4 proteoglycan.</title>
        <authorList>
            <person name="Kim H."/>
            <person name="Yoo J."/>
            <person name="Lee I."/>
            <person name="Kang Y.J."/>
            <person name="Cho H.S."/>
            <person name="Lee W."/>
        </authorList>
    </citation>
    <scope>X-RAY CRYSTALLOGRAPHY (2.01 ANGSTROMS) OF 8-204</scope>
    <scope>SUBUNIT</scope>
</reference>
<proteinExistence type="evidence at protein level"/>
<gene>
    <name evidence="7" type="primary">Nudt16l1</name>
    <name evidence="4" type="synonym">Sdos</name>
    <name evidence="1" type="synonym">Tirr</name>
</gene>
<sequence length="211" mass="23414">MSTTTVPELKQISREEAMRLGPGWSHSCHAMLYAANPGQLFGRIPMRFSVLMQMRFDGLLGFPGGFVDRRFWSLEDGLNRVLGLGLGGLRLTEADYLSSHLTEGPHRVVAHLYARQLTLEQLHAVEISAVHSRDHGLEVLGLVRVPLYTQKDRVGGFPNFLSNAFVSTAKYQLLFALKVLNMMPSEKLAEALASATEKQKKALEKLLPPSS</sequence>
<organism>
    <name type="scientific">Mus musculus</name>
    <name type="common">Mouse</name>
    <dbReference type="NCBI Taxonomy" id="10090"/>
    <lineage>
        <taxon>Eukaryota</taxon>
        <taxon>Metazoa</taxon>
        <taxon>Chordata</taxon>
        <taxon>Craniata</taxon>
        <taxon>Vertebrata</taxon>
        <taxon>Euteleostomi</taxon>
        <taxon>Mammalia</taxon>
        <taxon>Eutheria</taxon>
        <taxon>Euarchontoglires</taxon>
        <taxon>Glires</taxon>
        <taxon>Rodentia</taxon>
        <taxon>Myomorpha</taxon>
        <taxon>Muroidea</taxon>
        <taxon>Muridae</taxon>
        <taxon>Murinae</taxon>
        <taxon>Mus</taxon>
        <taxon>Mus</taxon>
    </lineage>
</organism>
<protein>
    <recommendedName>
        <fullName evidence="1">Tudor-interacting repair regulator protein</fullName>
    </recommendedName>
    <alternativeName>
        <fullName evidence="7">NUDT16-like protein 1</fullName>
    </alternativeName>
    <alternativeName>
        <fullName evidence="4">Protein syndesmos</fullName>
    </alternativeName>
</protein>